<organism>
    <name type="scientific">Mycobacterium tuberculosis (strain ATCC 25618 / H37Rv)</name>
    <dbReference type="NCBI Taxonomy" id="83332"/>
    <lineage>
        <taxon>Bacteria</taxon>
        <taxon>Bacillati</taxon>
        <taxon>Actinomycetota</taxon>
        <taxon>Actinomycetes</taxon>
        <taxon>Mycobacteriales</taxon>
        <taxon>Mycobacteriaceae</taxon>
        <taxon>Mycobacterium</taxon>
        <taxon>Mycobacterium tuberculosis complex</taxon>
    </lineage>
</organism>
<protein>
    <recommendedName>
        <fullName evidence="13">ESX-1 secretion system protein EccCb1</fullName>
    </recommendedName>
    <alternativeName>
        <fullName evidence="12">ESX conserved component Cb1</fullName>
    </alternativeName>
    <alternativeName>
        <fullName evidence="11">Snm2 secretory protein</fullName>
    </alternativeName>
    <alternativeName>
        <fullName evidence="13">Type VII secretion system protein EccCb1</fullName>
        <shortName evidence="13">T7SS protein EccCb1</shortName>
    </alternativeName>
</protein>
<keyword id="KW-0002">3D-structure</keyword>
<keyword id="KW-0067">ATP-binding</keyword>
<keyword id="KW-0963">Cytoplasm</keyword>
<keyword id="KW-0547">Nucleotide-binding</keyword>
<keyword id="KW-1185">Reference proteome</keyword>
<keyword id="KW-0677">Repeat</keyword>
<comment type="function">
    <text evidence="2 5 6 14">Part of the ESX-1 specialized secretion system, which delivers several virulence factors to host cells during infection, including the key virulence factors EsxA (ESAT-6) and EsxB (CFP-10) (PubMed:14557536, PubMed:14557547, PubMed:16368961, PubMed:16973880). EccCb1 may link the cytosolic components of the system with the membrane components (PubMed:16973880).</text>
</comment>
<comment type="activity regulation">
    <text evidence="16">EsxB binding to the second FtsK domain of EccCb1 causes multimerization; a subsequent unknown step relieves the allosteric inhibition of linker 2 on FtsK domain 1 (in EccCa1 subunit), activating the ATPase activity (PubMed:25865481).</text>
</comment>
<comment type="subunit">
    <text evidence="2 5 6 7 15">Part of the ESX-1 / type VII secretion system (T7SS), which is composed of cytosolic and membrane components. The ESX-1 membrane complex is composed of EccB1, EccCa1, EccCb1, EccD1 and EccE1 (PubMed:14557536, PubMed:16368961, PubMed:19876390). Interacts with EccCa1, EspK and the C-terminus of EsxB (PubMed:14557536, PubMed:16973880, PubMed:17676952). Residues 1-261 interact with EsxB and an artificial EsxB-EsxA heterodimer (PubMed:19854905).</text>
</comment>
<comment type="interaction">
    <interactant intactId="EBI-6514882">
        <id>P9WNB1</id>
    </interactant>
    <interactant intactId="EBI-1253936">
        <id>P9WNK5</id>
        <label>esxB</label>
    </interactant>
    <organismsDiffer>false</organismsDiffer>
    <experiments>3</experiments>
</comment>
<comment type="subcellular location">
    <subcellularLocation>
        <location evidence="13">Cytoplasm</location>
    </subcellularLocation>
    <text evidence="9">Localizes at or near the cell pole in (on average) 1 discrete spot upon overexpression in M.smegmatis (PubMed:22233444).</text>
</comment>
<comment type="domain">
    <text evidence="2">The C-terminus (residues 252-747) interacts with EsxB, the whole protein is required for interaction with EccCa1 (PubMed:14557536).</text>
</comment>
<comment type="disruption phenotype">
    <text evidence="2 3 4 5">Disruption abolishes EsxA and EsxB secretion, but not their expression (PubMed:14557536, PubMed:14557547). It results in a lack of antigen specific immunogenicity and leads to attenuated virulence (PubMed:16368961). Mutants exhibit defects in bacterial growth during the acute phase of a mouse infection (PubMed:14557536). No growth in the human macrophage-like cell line THP-1, no cytotoxicity (PubMed:14756778).</text>
</comment>
<comment type="miscellaneous">
    <text evidence="13">In ESX-1 cluster, the FtsK/SpoIIIE-like protein is split in two genes.</text>
</comment>
<comment type="miscellaneous">
    <text evidence="8">Was identified as a high-confidence drug target.</text>
</comment>
<accession>P9WNB1</accession>
<accession>L0TGZ9</accession>
<accession>O69736</accession>
<accession>Q7D4P5</accession>
<dbReference type="EMBL" id="AL123456">
    <property type="protein sequence ID" value="CCP46700.1"/>
    <property type="molecule type" value="Genomic_DNA"/>
</dbReference>
<dbReference type="PIR" id="E70802">
    <property type="entry name" value="E70802"/>
</dbReference>
<dbReference type="RefSeq" id="NP_218388.1">
    <property type="nucleotide sequence ID" value="NC_000962.3"/>
</dbReference>
<dbReference type="RefSeq" id="WP_003399865.1">
    <property type="nucleotide sequence ID" value="NZ_NVQJ01000074.1"/>
</dbReference>
<dbReference type="PDB" id="6J19">
    <property type="method" value="X-ray"/>
    <property type="resolution" value="1.98 A"/>
    <property type="chains" value="A=315-591"/>
</dbReference>
<dbReference type="PDB" id="6JD4">
    <property type="method" value="X-ray"/>
    <property type="resolution" value="2.10 A"/>
    <property type="chains" value="A/B=315-591"/>
</dbReference>
<dbReference type="PDBsum" id="6J19"/>
<dbReference type="PDBsum" id="6JD4"/>
<dbReference type="SMR" id="P9WNB1"/>
<dbReference type="FunCoup" id="P9WNB1">
    <property type="interactions" value="2"/>
</dbReference>
<dbReference type="IntAct" id="P9WNB1">
    <property type="interactions" value="1"/>
</dbReference>
<dbReference type="STRING" id="83332.Rv3871"/>
<dbReference type="PaxDb" id="83332-Rv3871"/>
<dbReference type="DNASU" id="886202"/>
<dbReference type="GeneID" id="886202"/>
<dbReference type="KEGG" id="mtu:Rv3871"/>
<dbReference type="KEGG" id="mtv:RVBD_3871"/>
<dbReference type="TubercuList" id="Rv3871"/>
<dbReference type="eggNOG" id="COG1674">
    <property type="taxonomic scope" value="Bacteria"/>
</dbReference>
<dbReference type="InParanoid" id="P9WNB1"/>
<dbReference type="OrthoDB" id="9807790at2"/>
<dbReference type="PhylomeDB" id="P9WNB1"/>
<dbReference type="Proteomes" id="UP000001584">
    <property type="component" value="Chromosome"/>
</dbReference>
<dbReference type="GO" id="GO:0005737">
    <property type="term" value="C:cytoplasm"/>
    <property type="evidence" value="ECO:0007669"/>
    <property type="project" value="UniProtKB-SubCell"/>
</dbReference>
<dbReference type="GO" id="GO:0009274">
    <property type="term" value="C:peptidoglycan-based cell wall"/>
    <property type="evidence" value="ECO:0007005"/>
    <property type="project" value="MTBBASE"/>
</dbReference>
<dbReference type="GO" id="GO:0005886">
    <property type="term" value="C:plasma membrane"/>
    <property type="evidence" value="ECO:0007005"/>
    <property type="project" value="MTBBASE"/>
</dbReference>
<dbReference type="GO" id="GO:0005524">
    <property type="term" value="F:ATP binding"/>
    <property type="evidence" value="ECO:0007669"/>
    <property type="project" value="UniProtKB-KW"/>
</dbReference>
<dbReference type="GO" id="GO:0016887">
    <property type="term" value="F:ATP hydrolysis activity"/>
    <property type="evidence" value="ECO:0007669"/>
    <property type="project" value="InterPro"/>
</dbReference>
<dbReference type="GO" id="GO:0003677">
    <property type="term" value="F:DNA binding"/>
    <property type="evidence" value="ECO:0007669"/>
    <property type="project" value="InterPro"/>
</dbReference>
<dbReference type="GO" id="GO:0051701">
    <property type="term" value="P:biological process involved in interaction with host"/>
    <property type="evidence" value="ECO:0000315"/>
    <property type="project" value="MTBBASE"/>
</dbReference>
<dbReference type="GO" id="GO:0044315">
    <property type="term" value="P:protein secretion by the type VII secretion system"/>
    <property type="evidence" value="ECO:0000315"/>
    <property type="project" value="MTBBASE"/>
</dbReference>
<dbReference type="GO" id="GO:0042783">
    <property type="term" value="P:symbiont-mediated evasion of host immune response"/>
    <property type="evidence" value="ECO:0000315"/>
    <property type="project" value="MTBBASE"/>
</dbReference>
<dbReference type="FunFam" id="3.40.50.300:FF:001947">
    <property type="entry name" value="ESX-1 secretion system protein EccCb1"/>
    <property type="match status" value="1"/>
</dbReference>
<dbReference type="FunFam" id="3.40.50.300:FF:002024">
    <property type="entry name" value="ESX-1 secretion system protein EccCb1"/>
    <property type="match status" value="1"/>
</dbReference>
<dbReference type="Gene3D" id="3.40.50.300">
    <property type="entry name" value="P-loop containing nucleotide triphosphate hydrolases"/>
    <property type="match status" value="2"/>
</dbReference>
<dbReference type="InterPro" id="IPR003593">
    <property type="entry name" value="AAA+_ATPase"/>
</dbReference>
<dbReference type="InterPro" id="IPR023837">
    <property type="entry name" value="EccCb-like_Actinobacteria"/>
</dbReference>
<dbReference type="InterPro" id="IPR050206">
    <property type="entry name" value="FtsK/SpoIIIE/SftA"/>
</dbReference>
<dbReference type="InterPro" id="IPR002543">
    <property type="entry name" value="FtsK_dom"/>
</dbReference>
<dbReference type="InterPro" id="IPR027417">
    <property type="entry name" value="P-loop_NTPase"/>
</dbReference>
<dbReference type="NCBIfam" id="TIGR03925">
    <property type="entry name" value="T7SS_EccC_b"/>
    <property type="match status" value="1"/>
</dbReference>
<dbReference type="PANTHER" id="PTHR22683">
    <property type="entry name" value="SPORULATION PROTEIN RELATED"/>
    <property type="match status" value="1"/>
</dbReference>
<dbReference type="PANTHER" id="PTHR22683:SF1">
    <property type="entry name" value="TYPE VII SECRETION SYSTEM PROTEIN ESSC"/>
    <property type="match status" value="1"/>
</dbReference>
<dbReference type="Pfam" id="PF01580">
    <property type="entry name" value="FtsK_SpoIIIE"/>
    <property type="match status" value="2"/>
</dbReference>
<dbReference type="SMART" id="SM00382">
    <property type="entry name" value="AAA"/>
    <property type="match status" value="2"/>
</dbReference>
<dbReference type="SUPFAM" id="SSF52540">
    <property type="entry name" value="P-loop containing nucleoside triphosphate hydrolases"/>
    <property type="match status" value="2"/>
</dbReference>
<dbReference type="PROSITE" id="PS50901">
    <property type="entry name" value="FTSK"/>
    <property type="match status" value="2"/>
</dbReference>
<sequence>MTAEPEVRTLREVVLDQLGTAESRAYKMWLPPLTNPVPLNELIARDRRQPLRFALGIMDEPRRHLQDVWGVDVSGAGGNIGIGGAPQTGKSTLLQTMVMSAAATHSPRNVQFYCIDLGGGGLIYLENLPHVGGVANRSEPDKVNRVVAEMQAVMRQRETTFKEHRVGSIGMYRQLRDDPSQPVASDPYGDVFLIIDGWPGFVGEFPDLEGQVQDLAAQGLAFGVHVIISTPRWTELKSRVRDYLGTKIEFRLGDVNETQIDRITREIPANRPGRAVSMEKHHLMIGVPRFDGVHSADNLVEAITAGVTQIASQHTEQAPPVRVLPERIHLHELDPNPPGPESDYRTRWEIPIGLRETDLTPAHCHMHTNPHLLIFGAAKSGKTTIAHAIARAICARNSPQQVRFMLADYRSGLLDAVPDTHLLGAGAINRNSASLDEAVQALAVNLKKRLPPTDLTTAQLRSRSWWSGFDVVLLVDDWHMIVGAAGGMPPMAPLAPLLPAAADIGLHIIVTCQMSQAYKATMDKFVGAAFGSGAPTMFLSGEKQEFPSSEFKVKRRPPGQAFLVSPDGKEVIQAPYIEPPEEVFAAPPSAG</sequence>
<evidence type="ECO:0000255" key="1">
    <source>
        <dbReference type="PROSITE-ProRule" id="PRU00289"/>
    </source>
</evidence>
<evidence type="ECO:0000269" key="2">
    <source>
    </source>
</evidence>
<evidence type="ECO:0000269" key="3">
    <source>
    </source>
</evidence>
<evidence type="ECO:0000269" key="4">
    <source>
    </source>
</evidence>
<evidence type="ECO:0000269" key="5">
    <source>
    </source>
</evidence>
<evidence type="ECO:0000269" key="6">
    <source>
    </source>
</evidence>
<evidence type="ECO:0000269" key="7">
    <source>
    </source>
</evidence>
<evidence type="ECO:0000269" key="8">
    <source>
    </source>
</evidence>
<evidence type="ECO:0000269" key="9">
    <source>
    </source>
</evidence>
<evidence type="ECO:0000269" key="10">
    <source>
    </source>
</evidence>
<evidence type="ECO:0000303" key="11">
    <source>
    </source>
</evidence>
<evidence type="ECO:0000303" key="12">
    <source>
    </source>
</evidence>
<evidence type="ECO:0000305" key="13"/>
<evidence type="ECO:0000305" key="14">
    <source>
    </source>
</evidence>
<evidence type="ECO:0000305" key="15">
    <source>
    </source>
</evidence>
<evidence type="ECO:0000305" key="16">
    <source>
    </source>
</evidence>
<evidence type="ECO:0007829" key="17">
    <source>
        <dbReference type="PDB" id="6J19"/>
    </source>
</evidence>
<evidence type="ECO:0007829" key="18">
    <source>
        <dbReference type="PDB" id="6JD4"/>
    </source>
</evidence>
<proteinExistence type="evidence at protein level"/>
<name>ECC1B_MYCTU</name>
<gene>
    <name evidence="12" type="primary">eccCb1</name>
    <name evidence="11" type="synonym">snm2</name>
    <name type="ordered locus">Rv3871</name>
</gene>
<reference key="1">
    <citation type="journal article" date="1998" name="Nature">
        <title>Deciphering the biology of Mycobacterium tuberculosis from the complete genome sequence.</title>
        <authorList>
            <person name="Cole S.T."/>
            <person name="Brosch R."/>
            <person name="Parkhill J."/>
            <person name="Garnier T."/>
            <person name="Churcher C.M."/>
            <person name="Harris D.E."/>
            <person name="Gordon S.V."/>
            <person name="Eiglmeier K."/>
            <person name="Gas S."/>
            <person name="Barry C.E. III"/>
            <person name="Tekaia F."/>
            <person name="Badcock K."/>
            <person name="Basham D."/>
            <person name="Brown D."/>
            <person name="Chillingworth T."/>
            <person name="Connor R."/>
            <person name="Davies R.M."/>
            <person name="Devlin K."/>
            <person name="Feltwell T."/>
            <person name="Gentles S."/>
            <person name="Hamlin N."/>
            <person name="Holroyd S."/>
            <person name="Hornsby T."/>
            <person name="Jagels K."/>
            <person name="Krogh A."/>
            <person name="McLean J."/>
            <person name="Moule S."/>
            <person name="Murphy L.D."/>
            <person name="Oliver S."/>
            <person name="Osborne J."/>
            <person name="Quail M.A."/>
            <person name="Rajandream M.A."/>
            <person name="Rogers J."/>
            <person name="Rutter S."/>
            <person name="Seeger K."/>
            <person name="Skelton S."/>
            <person name="Squares S."/>
            <person name="Squares R."/>
            <person name="Sulston J.E."/>
            <person name="Taylor K."/>
            <person name="Whitehead S."/>
            <person name="Barrell B.G."/>
        </authorList>
    </citation>
    <scope>NUCLEOTIDE SEQUENCE [LARGE SCALE GENOMIC DNA]</scope>
    <source>
        <strain>ATCC 25618 / H37Rv</strain>
    </source>
</reference>
<reference key="2">
    <citation type="journal article" date="2003" name="Proc. Natl. Acad. Sci. U.S.A.">
        <title>The primary mechanism of attenuation of bacillus Calmette-Guerin is a loss of secreted lytic function required for invasion of lung interstitial tissue.</title>
        <authorList>
            <person name="Hsu T."/>
            <person name="Hingley-Wilson S.M."/>
            <person name="Chen B."/>
            <person name="Chen M."/>
            <person name="Dai A.Z."/>
            <person name="Morin P.M."/>
            <person name="Marks C.B."/>
            <person name="Padiyar J."/>
            <person name="Goulding C."/>
            <person name="Gingery M."/>
            <person name="Eisenberg D."/>
            <person name="Russell R.G."/>
            <person name="Derrick S.C."/>
            <person name="Collins F.M."/>
            <person name="Morris S.L."/>
            <person name="King C.H."/>
            <person name="Jacobs W.R. Jr."/>
        </authorList>
    </citation>
    <scope>FUNCTION</scope>
    <scope>DISRUPTION PHENOTYPE</scope>
    <source>
        <strain>ATCC 25618 / H37Rv</strain>
    </source>
</reference>
<reference key="3">
    <citation type="journal article" date="2003" name="Proc. Natl. Acad. Sci. U.S.A.">
        <title>Acute infection and macrophage subversion by Mycobacterium tuberculosis require a specialized secretion system.</title>
        <authorList>
            <person name="Stanley S.A."/>
            <person name="Raghavan S."/>
            <person name="Hwang W.W."/>
            <person name="Cox J.S."/>
        </authorList>
    </citation>
    <scope>FUNCTION</scope>
    <scope>SUBUNIT</scope>
    <scope>INTERACTION WITH ECCCA1 AND ESXB</scope>
    <scope>DOMAIN</scope>
    <scope>DISRUPTION PHENOTYPE</scope>
    <source>
        <strain>ATCC 35801 / TMC 107 / Erdman</strain>
    </source>
</reference>
<reference key="4">
    <citation type="journal article" date="2004" name="Mol. Microbiol.">
        <title>Individual RD1-region genes are required for export of ESAT-6/CFP-10 and for virulence of Mycobacterium tuberculosis.</title>
        <authorList>
            <person name="Guinn K.M."/>
            <person name="Hickey M.J."/>
            <person name="Mathur S.K."/>
            <person name="Zakel K.L."/>
            <person name="Grotzke J.E."/>
            <person name="Lewinsohn D.M."/>
            <person name="Smith S."/>
            <person name="Sherman D.R."/>
        </authorList>
    </citation>
    <scope>DISRUPTION PHENOTYPE</scope>
    <source>
        <strain>ATCC 25618 / H37Rv</strain>
    </source>
</reference>
<reference key="5">
    <citation type="journal article" date="2006" name="Infect. Immun.">
        <title>Dissection of ESAT-6 system 1 of Mycobacterium tuberculosis and impact on immunogenicity and virulence.</title>
        <authorList>
            <person name="Brodin P."/>
            <person name="Majlessi L."/>
            <person name="Marsollier L."/>
            <person name="de Jonge M.I."/>
            <person name="Bottai D."/>
            <person name="Demangel C."/>
            <person name="Hinds J."/>
            <person name="Neyrolles O."/>
            <person name="Butcher P.D."/>
            <person name="Leclerc C."/>
            <person name="Cole S.T."/>
            <person name="Brosch R."/>
        </authorList>
    </citation>
    <scope>FUNCTION</scope>
    <scope>SUBUNIT</scope>
    <scope>DISRUPTION PHENOTYPE</scope>
</reference>
<reference key="6">
    <citation type="journal article" date="2006" name="Science">
        <title>C-terminal signal sequence promotes virulence factor secretion in Mycobacterium tuberculosis.</title>
        <authorList>
            <person name="Champion P.A."/>
            <person name="Stanley S.A."/>
            <person name="Champion M.M."/>
            <person name="Brown E.J."/>
            <person name="Cox J.S."/>
        </authorList>
    </citation>
    <scope>FUNCTION</scope>
    <scope>INTERACTION WITH ESXB</scope>
</reference>
<reference key="7">
    <citation type="journal article" date="2007" name="PLoS Pathog.">
        <title>A mycobacterium ESX-1-secreted virulence factor with unique requirements for export.</title>
        <authorList>
            <person name="McLaughlin B."/>
            <person name="Chon J.S."/>
            <person name="MacGurn J.A."/>
            <person name="Carlsson F."/>
            <person name="Cheng T.L."/>
            <person name="Cox J.S."/>
            <person name="Brown E.J."/>
        </authorList>
    </citation>
    <scope>INTERACTION WITH ESPK</scope>
</reference>
<reference key="8">
    <citation type="journal article" date="2008" name="BMC Syst. Biol.">
        <title>targetTB: a target identification pipeline for Mycobacterium tuberculosis through an interactome, reactome and genome-scale structural analysis.</title>
        <authorList>
            <person name="Raman K."/>
            <person name="Yeturu K."/>
            <person name="Chandra N."/>
        </authorList>
    </citation>
    <scope>IDENTIFICATION AS A DRUG TARGET [LARGE SCALE ANALYSIS]</scope>
</reference>
<reference key="9">
    <citation type="journal article" date="2009" name="PLoS Pathog.">
        <title>Systematic genetic nomenclature for type VII secretion systems.</title>
        <authorList>
            <person name="Bitter W."/>
            <person name="Houben E.N."/>
            <person name="Bottai D."/>
            <person name="Brodin P."/>
            <person name="Brown E.J."/>
            <person name="Cox J.S."/>
            <person name="Derbyshire K."/>
            <person name="Fortune S.M."/>
            <person name="Gao L.Y."/>
            <person name="Liu J."/>
            <person name="Gey van Pittius N.C."/>
            <person name="Pym A.S."/>
            <person name="Rubin E.J."/>
            <person name="Sherman D.R."/>
            <person name="Cole S.T."/>
            <person name="Brosch R."/>
        </authorList>
    </citation>
    <scope>NOMENCLATURE</scope>
    <scope>SUBUNIT</scope>
</reference>
<reference key="10">
    <citation type="journal article" date="2010" name="J. Bacteriol.">
        <title>Conservation of structure and protein-protein interactions mediated by the secreted mycobacterial proteins EsxA, EsxB, and EspA.</title>
        <authorList>
            <person name="Callahan B."/>
            <person name="Nguyen K."/>
            <person name="Collins A."/>
            <person name="Valdes K."/>
            <person name="Caplow M."/>
            <person name="Crossman D.K."/>
            <person name="Steyn A.J."/>
            <person name="Eisele L."/>
            <person name="Derbyshire K.M."/>
        </authorList>
    </citation>
    <scope>SUBUNIT</scope>
    <source>
        <strain>ATCC 25618 / H37Rv</strain>
    </source>
</reference>
<reference key="11">
    <citation type="journal article" date="2011" name="Mol. Cell. Proteomics">
        <title>Proteogenomic analysis of Mycobacterium tuberculosis by high resolution mass spectrometry.</title>
        <authorList>
            <person name="Kelkar D.S."/>
            <person name="Kumar D."/>
            <person name="Kumar P."/>
            <person name="Balakrishnan L."/>
            <person name="Muthusamy B."/>
            <person name="Yadav A.K."/>
            <person name="Shrivastava P."/>
            <person name="Marimuthu A."/>
            <person name="Anand S."/>
            <person name="Sundaram H."/>
            <person name="Kingsbury R."/>
            <person name="Harsha H.C."/>
            <person name="Nair B."/>
            <person name="Prasad T.S."/>
            <person name="Chauhan D.S."/>
            <person name="Katoch K."/>
            <person name="Katoch V.M."/>
            <person name="Kumar P."/>
            <person name="Chaerkady R."/>
            <person name="Ramachandran S."/>
            <person name="Dash D."/>
            <person name="Pandey A."/>
        </authorList>
    </citation>
    <scope>IDENTIFICATION BY MASS SPECTROMETRY [LARGE SCALE ANALYSIS]</scope>
    <source>
        <strain>ATCC 25618 / H37Rv</strain>
    </source>
</reference>
<reference key="12">
    <citation type="journal article" date="2015" name="Cell">
        <title>Substrates control multimerization and activation of the multi-domain ATPase motor of type VII secretion.</title>
        <authorList>
            <person name="Rosenberg O.S."/>
            <person name="Dovala D."/>
            <person name="Li X."/>
            <person name="Connolly L."/>
            <person name="Bendebury A."/>
            <person name="Finer-Moore J."/>
            <person name="Holton J."/>
            <person name="Cheng Y."/>
            <person name="Stroud R.M."/>
            <person name="Cox J.S."/>
        </authorList>
    </citation>
    <scope>FUNCTION</scope>
    <scope>ACTIVITY REGULATION</scope>
    <scope>MUTAGENESIS OF LYS-90 AND LYS-382</scope>
</reference>
<reference key="13">
    <citation type="journal article" date="2012" name="Mol. Microbiol.">
        <title>Polar assembly and scaffolding proteins of the virulence-associated ESX-1 secretory apparatus in mycobacteria.</title>
        <authorList>
            <person name="Wirth S.E."/>
            <person name="Krywy J.A."/>
            <person name="Aldridge B.B."/>
            <person name="Fortune S.M."/>
            <person name="Fernandez-Suarez M."/>
            <person name="Gray T.A."/>
            <person name="Derbyshire K.M."/>
        </authorList>
    </citation>
    <scope>SUBCELLULAR LOCATION</scope>
    <source>
        <strain>H37Rv</strain>
    </source>
</reference>
<feature type="chain" id="PRO_0000393429" description="ESX-1 secretion system protein EccCb1">
    <location>
        <begin position="1"/>
        <end position="591"/>
    </location>
</feature>
<feature type="domain" description="FtsK 1" evidence="1">
    <location>
        <begin position="65"/>
        <end position="259"/>
    </location>
</feature>
<feature type="domain" description="FtsK 2" evidence="1">
    <location>
        <begin position="359"/>
        <end position="545"/>
    </location>
</feature>
<feature type="binding site" evidence="1">
    <location>
        <begin position="84"/>
        <end position="91"/>
    </location>
    <ligand>
        <name>ATP</name>
        <dbReference type="ChEBI" id="CHEBI:30616"/>
    </ligand>
</feature>
<feature type="binding site" evidence="1">
    <location>
        <begin position="376"/>
        <end position="383"/>
    </location>
    <ligand>
        <name>ATP</name>
        <dbReference type="ChEBI" id="CHEBI:30616"/>
    </ligand>
</feature>
<feature type="mutagenesis site" description="Cells unable to export EsxB." evidence="10">
    <original>K</original>
    <variation>T</variation>
    <location>
        <position position="90"/>
    </location>
</feature>
<feature type="mutagenesis site" description="Cells unable to export EsxB." evidence="10">
    <original>K</original>
    <variation>T</variation>
    <location>
        <position position="382"/>
    </location>
</feature>
<feature type="helix" evidence="17">
    <location>
        <begin position="330"/>
        <end position="333"/>
    </location>
</feature>
<feature type="strand" evidence="17">
    <location>
        <begin position="334"/>
        <end position="336"/>
    </location>
</feature>
<feature type="helix" evidence="17">
    <location>
        <begin position="344"/>
        <end position="347"/>
    </location>
</feature>
<feature type="strand" evidence="17">
    <location>
        <begin position="349"/>
        <end position="355"/>
    </location>
</feature>
<feature type="turn" evidence="17">
    <location>
        <begin position="356"/>
        <end position="358"/>
    </location>
</feature>
<feature type="strand" evidence="17">
    <location>
        <begin position="361"/>
        <end position="365"/>
    </location>
</feature>
<feature type="turn" evidence="17">
    <location>
        <begin position="366"/>
        <end position="368"/>
    </location>
</feature>
<feature type="strand" evidence="17">
    <location>
        <begin position="372"/>
        <end position="376"/>
    </location>
</feature>
<feature type="helix" evidence="17">
    <location>
        <begin position="382"/>
        <end position="396"/>
    </location>
</feature>
<feature type="turn" evidence="17">
    <location>
        <begin position="399"/>
        <end position="401"/>
    </location>
</feature>
<feature type="strand" evidence="17">
    <location>
        <begin position="402"/>
        <end position="407"/>
    </location>
</feature>
<feature type="helix" evidence="17">
    <location>
        <begin position="419"/>
        <end position="421"/>
    </location>
</feature>
<feature type="strand" evidence="17">
    <location>
        <begin position="424"/>
        <end position="426"/>
    </location>
</feature>
<feature type="helix" evidence="17">
    <location>
        <begin position="432"/>
        <end position="447"/>
    </location>
</feature>
<feature type="strand" evidence="18">
    <location>
        <begin position="453"/>
        <end position="455"/>
    </location>
</feature>
<feature type="helix" evidence="17">
    <location>
        <begin position="457"/>
        <end position="462"/>
    </location>
</feature>
<feature type="turn" evidence="17">
    <location>
        <begin position="463"/>
        <end position="465"/>
    </location>
</feature>
<feature type="strand" evidence="17">
    <location>
        <begin position="470"/>
        <end position="475"/>
    </location>
</feature>
<feature type="helix" evidence="17">
    <location>
        <begin position="478"/>
        <end position="483"/>
    </location>
</feature>
<feature type="turn" evidence="18">
    <location>
        <begin position="485"/>
        <end position="487"/>
    </location>
</feature>
<feature type="helix" evidence="17">
    <location>
        <begin position="492"/>
        <end position="494"/>
    </location>
</feature>
<feature type="turn" evidence="17">
    <location>
        <begin position="495"/>
        <end position="497"/>
    </location>
</feature>
<feature type="helix" evidence="17">
    <location>
        <begin position="498"/>
        <end position="500"/>
    </location>
</feature>
<feature type="helix" evidence="17">
    <location>
        <begin position="501"/>
        <end position="504"/>
    </location>
</feature>
<feature type="strand" evidence="17">
    <location>
        <begin position="506"/>
        <end position="513"/>
    </location>
</feature>
<feature type="helix" evidence="17">
    <location>
        <begin position="514"/>
        <end position="520"/>
    </location>
</feature>
<feature type="strand" evidence="17">
    <location>
        <begin position="523"/>
        <end position="525"/>
    </location>
</feature>
<feature type="helix" evidence="17">
    <location>
        <begin position="526"/>
        <end position="531"/>
    </location>
</feature>
<feature type="strand" evidence="17">
    <location>
        <begin position="536"/>
        <end position="538"/>
    </location>
</feature>
<feature type="helix" evidence="17">
    <location>
        <begin position="543"/>
        <end position="545"/>
    </location>
</feature>
<feature type="strand" evidence="17">
    <location>
        <begin position="549"/>
        <end position="551"/>
    </location>
</feature>
<feature type="strand" evidence="17">
    <location>
        <begin position="560"/>
        <end position="565"/>
    </location>
</feature>
<feature type="strand" evidence="17">
    <location>
        <begin position="568"/>
        <end position="573"/>
    </location>
</feature>